<sequence>MLAATDLARILDGRRIADDLLDALKTRVDARVAAGKLPPTLAVVLVGSDPASVVYVRNKRRAAEKVGIKAYDFDLPEATTEAELAALIDRLNADPKIHGVLIQLPLPGIPDAHRLIQRIDPRKDVDGFHPQNVGHLALREFGLRPCTPRGIVTLLGHTDRPVRGRNATIVGVSNHVGRPMGLELLMAGCTVTSCHKFTPPQMLEAAVRQADILIVAVGRPGVIPGEWVKPGAVVIDVGINRLDDGQLVGDVGFESAVKRASWITPVPGGVGPMTVATLMQNTLEAAEATDC</sequence>
<organism>
    <name type="scientific">Xylella fastidiosa (strain Temecula1 / ATCC 700964)</name>
    <dbReference type="NCBI Taxonomy" id="183190"/>
    <lineage>
        <taxon>Bacteria</taxon>
        <taxon>Pseudomonadati</taxon>
        <taxon>Pseudomonadota</taxon>
        <taxon>Gammaproteobacteria</taxon>
        <taxon>Lysobacterales</taxon>
        <taxon>Lysobacteraceae</taxon>
        <taxon>Xylella</taxon>
    </lineage>
</organism>
<gene>
    <name evidence="1" type="primary">folD</name>
    <name type="ordered locus">PD_1449</name>
</gene>
<protein>
    <recommendedName>
        <fullName evidence="1">Bifunctional protein FolD</fullName>
    </recommendedName>
    <domain>
        <recommendedName>
            <fullName evidence="1">Methylenetetrahydrofolate dehydrogenase</fullName>
            <ecNumber evidence="1">1.5.1.5</ecNumber>
        </recommendedName>
    </domain>
    <domain>
        <recommendedName>
            <fullName evidence="1">Methenyltetrahydrofolate cyclohydrolase</fullName>
            <ecNumber evidence="1">3.5.4.9</ecNumber>
        </recommendedName>
    </domain>
</protein>
<evidence type="ECO:0000255" key="1">
    <source>
        <dbReference type="HAMAP-Rule" id="MF_01576"/>
    </source>
</evidence>
<accession>Q87BK4</accession>
<feature type="chain" id="PRO_0000268572" description="Bifunctional protein FolD">
    <location>
        <begin position="1"/>
        <end position="291"/>
    </location>
</feature>
<feature type="binding site" evidence="1">
    <location>
        <begin position="171"/>
        <end position="173"/>
    </location>
    <ligand>
        <name>NADP(+)</name>
        <dbReference type="ChEBI" id="CHEBI:58349"/>
    </ligand>
</feature>
<feature type="binding site" evidence="1">
    <location>
        <position position="239"/>
    </location>
    <ligand>
        <name>NADP(+)</name>
        <dbReference type="ChEBI" id="CHEBI:58349"/>
    </ligand>
</feature>
<name>FOLD_XYLFT</name>
<reference key="1">
    <citation type="journal article" date="2003" name="J. Bacteriol.">
        <title>Comparative analyses of the complete genome sequences of Pierce's disease and citrus variegated chlorosis strains of Xylella fastidiosa.</title>
        <authorList>
            <person name="Van Sluys M.A."/>
            <person name="de Oliveira M.C."/>
            <person name="Monteiro-Vitorello C.B."/>
            <person name="Miyaki C.Y."/>
            <person name="Furlan L.R."/>
            <person name="Camargo L.E.A."/>
            <person name="da Silva A.C.R."/>
            <person name="Moon D.H."/>
            <person name="Takita M.A."/>
            <person name="Lemos E.G.M."/>
            <person name="Machado M.A."/>
            <person name="Ferro M.I.T."/>
            <person name="da Silva F.R."/>
            <person name="Goldman M.H.S."/>
            <person name="Goldman G.H."/>
            <person name="Lemos M.V.F."/>
            <person name="El-Dorry H."/>
            <person name="Tsai S.M."/>
            <person name="Carrer H."/>
            <person name="Carraro D.M."/>
            <person name="de Oliveira R.C."/>
            <person name="Nunes L.R."/>
            <person name="Siqueira W.J."/>
            <person name="Coutinho L.L."/>
            <person name="Kimura E.T."/>
            <person name="Ferro E.S."/>
            <person name="Harakava R."/>
            <person name="Kuramae E.E."/>
            <person name="Marino C.L."/>
            <person name="Giglioti E."/>
            <person name="Abreu I.L."/>
            <person name="Alves L.M.C."/>
            <person name="do Amaral A.M."/>
            <person name="Baia G.S."/>
            <person name="Blanco S.R."/>
            <person name="Brito M.S."/>
            <person name="Cannavan F.S."/>
            <person name="Celestino A.V."/>
            <person name="da Cunha A.F."/>
            <person name="Fenille R.C."/>
            <person name="Ferro J.A."/>
            <person name="Formighieri E.F."/>
            <person name="Kishi L.T."/>
            <person name="Leoni S.G."/>
            <person name="Oliveira A.R."/>
            <person name="Rosa V.E. Jr."/>
            <person name="Sassaki F.T."/>
            <person name="Sena J.A.D."/>
            <person name="de Souza A.A."/>
            <person name="Truffi D."/>
            <person name="Tsukumo F."/>
            <person name="Yanai G.M."/>
            <person name="Zaros L.G."/>
            <person name="Civerolo E.L."/>
            <person name="Simpson A.J.G."/>
            <person name="Almeida N.F. Jr."/>
            <person name="Setubal J.C."/>
            <person name="Kitajima J.P."/>
        </authorList>
    </citation>
    <scope>NUCLEOTIDE SEQUENCE [LARGE SCALE GENOMIC DNA]</scope>
    <source>
        <strain>Temecula1 / ATCC 700964</strain>
    </source>
</reference>
<proteinExistence type="inferred from homology"/>
<comment type="function">
    <text evidence="1">Catalyzes the oxidation of 5,10-methylenetetrahydrofolate to 5,10-methenyltetrahydrofolate and then the hydrolysis of 5,10-methenyltetrahydrofolate to 10-formyltetrahydrofolate.</text>
</comment>
<comment type="catalytic activity">
    <reaction evidence="1">
        <text>(6R)-5,10-methylene-5,6,7,8-tetrahydrofolate + NADP(+) = (6R)-5,10-methenyltetrahydrofolate + NADPH</text>
        <dbReference type="Rhea" id="RHEA:22812"/>
        <dbReference type="ChEBI" id="CHEBI:15636"/>
        <dbReference type="ChEBI" id="CHEBI:57455"/>
        <dbReference type="ChEBI" id="CHEBI:57783"/>
        <dbReference type="ChEBI" id="CHEBI:58349"/>
        <dbReference type="EC" id="1.5.1.5"/>
    </reaction>
</comment>
<comment type="catalytic activity">
    <reaction evidence="1">
        <text>(6R)-5,10-methenyltetrahydrofolate + H2O = (6R)-10-formyltetrahydrofolate + H(+)</text>
        <dbReference type="Rhea" id="RHEA:23700"/>
        <dbReference type="ChEBI" id="CHEBI:15377"/>
        <dbReference type="ChEBI" id="CHEBI:15378"/>
        <dbReference type="ChEBI" id="CHEBI:57455"/>
        <dbReference type="ChEBI" id="CHEBI:195366"/>
        <dbReference type="EC" id="3.5.4.9"/>
    </reaction>
</comment>
<comment type="pathway">
    <text evidence="1">One-carbon metabolism; tetrahydrofolate interconversion.</text>
</comment>
<comment type="subunit">
    <text evidence="1">Homodimer.</text>
</comment>
<comment type="similarity">
    <text evidence="1">Belongs to the tetrahydrofolate dehydrogenase/cyclohydrolase family.</text>
</comment>
<keyword id="KW-0028">Amino-acid biosynthesis</keyword>
<keyword id="KW-0368">Histidine biosynthesis</keyword>
<keyword id="KW-0378">Hydrolase</keyword>
<keyword id="KW-0486">Methionine biosynthesis</keyword>
<keyword id="KW-0511">Multifunctional enzyme</keyword>
<keyword id="KW-0521">NADP</keyword>
<keyword id="KW-0554">One-carbon metabolism</keyword>
<keyword id="KW-0560">Oxidoreductase</keyword>
<keyword id="KW-0658">Purine biosynthesis</keyword>
<keyword id="KW-1185">Reference proteome</keyword>
<dbReference type="EC" id="1.5.1.5" evidence="1"/>
<dbReference type="EC" id="3.5.4.9" evidence="1"/>
<dbReference type="EMBL" id="AE009442">
    <property type="protein sequence ID" value="AAO29293.1"/>
    <property type="molecule type" value="Genomic_DNA"/>
</dbReference>
<dbReference type="RefSeq" id="WP_004088423.1">
    <property type="nucleotide sequence ID" value="NC_004556.1"/>
</dbReference>
<dbReference type="SMR" id="Q87BK4"/>
<dbReference type="GeneID" id="93905270"/>
<dbReference type="KEGG" id="xft:PD_1449"/>
<dbReference type="HOGENOM" id="CLU_034045_2_1_6"/>
<dbReference type="UniPathway" id="UPA00193"/>
<dbReference type="Proteomes" id="UP000002516">
    <property type="component" value="Chromosome"/>
</dbReference>
<dbReference type="GO" id="GO:0005829">
    <property type="term" value="C:cytosol"/>
    <property type="evidence" value="ECO:0007669"/>
    <property type="project" value="TreeGrafter"/>
</dbReference>
<dbReference type="GO" id="GO:0004477">
    <property type="term" value="F:methenyltetrahydrofolate cyclohydrolase activity"/>
    <property type="evidence" value="ECO:0007669"/>
    <property type="project" value="UniProtKB-UniRule"/>
</dbReference>
<dbReference type="GO" id="GO:0004488">
    <property type="term" value="F:methylenetetrahydrofolate dehydrogenase (NADP+) activity"/>
    <property type="evidence" value="ECO:0007669"/>
    <property type="project" value="UniProtKB-UniRule"/>
</dbReference>
<dbReference type="GO" id="GO:0000105">
    <property type="term" value="P:L-histidine biosynthetic process"/>
    <property type="evidence" value="ECO:0007669"/>
    <property type="project" value="UniProtKB-KW"/>
</dbReference>
<dbReference type="GO" id="GO:0009086">
    <property type="term" value="P:methionine biosynthetic process"/>
    <property type="evidence" value="ECO:0007669"/>
    <property type="project" value="UniProtKB-KW"/>
</dbReference>
<dbReference type="GO" id="GO:0006164">
    <property type="term" value="P:purine nucleotide biosynthetic process"/>
    <property type="evidence" value="ECO:0007669"/>
    <property type="project" value="UniProtKB-KW"/>
</dbReference>
<dbReference type="GO" id="GO:0035999">
    <property type="term" value="P:tetrahydrofolate interconversion"/>
    <property type="evidence" value="ECO:0007669"/>
    <property type="project" value="UniProtKB-UniRule"/>
</dbReference>
<dbReference type="CDD" id="cd01080">
    <property type="entry name" value="NAD_bind_m-THF_DH_Cyclohyd"/>
    <property type="match status" value="1"/>
</dbReference>
<dbReference type="FunFam" id="3.40.50.720:FF:000006">
    <property type="entry name" value="Bifunctional protein FolD"/>
    <property type="match status" value="1"/>
</dbReference>
<dbReference type="FunFam" id="3.40.50.10860:FF:000005">
    <property type="entry name" value="C-1-tetrahydrofolate synthase, cytoplasmic, putative"/>
    <property type="match status" value="1"/>
</dbReference>
<dbReference type="Gene3D" id="3.40.50.10860">
    <property type="entry name" value="Leucine Dehydrogenase, chain A, domain 1"/>
    <property type="match status" value="1"/>
</dbReference>
<dbReference type="Gene3D" id="3.40.50.720">
    <property type="entry name" value="NAD(P)-binding Rossmann-like Domain"/>
    <property type="match status" value="1"/>
</dbReference>
<dbReference type="HAMAP" id="MF_01576">
    <property type="entry name" value="THF_DHG_CYH"/>
    <property type="match status" value="1"/>
</dbReference>
<dbReference type="InterPro" id="IPR046346">
    <property type="entry name" value="Aminoacid_DH-like_N_sf"/>
</dbReference>
<dbReference type="InterPro" id="IPR036291">
    <property type="entry name" value="NAD(P)-bd_dom_sf"/>
</dbReference>
<dbReference type="InterPro" id="IPR000672">
    <property type="entry name" value="THF_DH/CycHdrlase"/>
</dbReference>
<dbReference type="InterPro" id="IPR020630">
    <property type="entry name" value="THF_DH/CycHdrlase_cat_dom"/>
</dbReference>
<dbReference type="InterPro" id="IPR020867">
    <property type="entry name" value="THF_DH/CycHdrlase_CS"/>
</dbReference>
<dbReference type="InterPro" id="IPR020631">
    <property type="entry name" value="THF_DH/CycHdrlase_NAD-bd_dom"/>
</dbReference>
<dbReference type="NCBIfam" id="NF008058">
    <property type="entry name" value="PRK10792.1"/>
    <property type="match status" value="1"/>
</dbReference>
<dbReference type="PANTHER" id="PTHR48099:SF5">
    <property type="entry name" value="C-1-TETRAHYDROFOLATE SYNTHASE, CYTOPLASMIC"/>
    <property type="match status" value="1"/>
</dbReference>
<dbReference type="PANTHER" id="PTHR48099">
    <property type="entry name" value="C-1-TETRAHYDROFOLATE SYNTHASE, CYTOPLASMIC-RELATED"/>
    <property type="match status" value="1"/>
</dbReference>
<dbReference type="Pfam" id="PF00763">
    <property type="entry name" value="THF_DHG_CYH"/>
    <property type="match status" value="1"/>
</dbReference>
<dbReference type="Pfam" id="PF02882">
    <property type="entry name" value="THF_DHG_CYH_C"/>
    <property type="match status" value="1"/>
</dbReference>
<dbReference type="PRINTS" id="PR00085">
    <property type="entry name" value="THFDHDRGNASE"/>
</dbReference>
<dbReference type="SUPFAM" id="SSF53223">
    <property type="entry name" value="Aminoacid dehydrogenase-like, N-terminal domain"/>
    <property type="match status" value="1"/>
</dbReference>
<dbReference type="SUPFAM" id="SSF51735">
    <property type="entry name" value="NAD(P)-binding Rossmann-fold domains"/>
    <property type="match status" value="1"/>
</dbReference>
<dbReference type="PROSITE" id="PS00767">
    <property type="entry name" value="THF_DHG_CYH_2"/>
    <property type="match status" value="1"/>
</dbReference>